<sequence length="465" mass="52813">MKLRTRKASQQSSPIQTQRTARAKRKYSEVDDSLPSGGEKPSKNETGLLSSIKKFIKGSTPKEERENPSKRSRIERDIDNNLITSTPRTGEKPDKQLSRVRRKSPVNGEAGSYEMTNQHIKQNGKLEDNPCSGSPPRTTLLGTIFSPVFNFFSPANKNGTSGSDSPGQAVEAEEIVKQLDMEQVDEITTSTTSANGAAYSNQAVQVRPSLNNGLEEAEETVTRDIPPLTAPVTPESGYSSAHAEATYEEDWEVFDPYYFIKHVPPLTEEQLNRKPALPLKTRSTPEFSLVLDLDETLVHCSLNELEDAALTFPVLFQDVIYQVYVRLRPFFREFLERMSQMYEIILFTASKKVYADKLLNILDPKKQLVRHRLFREHCVCVQGNYIKDLNILGRDLSKTIIIDNSPQAFAYQLSNGIPIESWFMDKNDNELLKLIPFLEKLVELNEDVRPHIRDRFRLHDLLPPD</sequence>
<proteinExistence type="evidence at protein level"/>
<reference key="1">
    <citation type="journal article" date="2005" name="Science">
        <title>The transcriptional landscape of the mammalian genome.</title>
        <authorList>
            <person name="Carninci P."/>
            <person name="Kasukawa T."/>
            <person name="Katayama S."/>
            <person name="Gough J."/>
            <person name="Frith M.C."/>
            <person name="Maeda N."/>
            <person name="Oyama R."/>
            <person name="Ravasi T."/>
            <person name="Lenhard B."/>
            <person name="Wells C."/>
            <person name="Kodzius R."/>
            <person name="Shimokawa K."/>
            <person name="Bajic V.B."/>
            <person name="Brenner S.E."/>
            <person name="Batalov S."/>
            <person name="Forrest A.R."/>
            <person name="Zavolan M."/>
            <person name="Davis M.J."/>
            <person name="Wilming L.G."/>
            <person name="Aidinis V."/>
            <person name="Allen J.E."/>
            <person name="Ambesi-Impiombato A."/>
            <person name="Apweiler R."/>
            <person name="Aturaliya R.N."/>
            <person name="Bailey T.L."/>
            <person name="Bansal M."/>
            <person name="Baxter L."/>
            <person name="Beisel K.W."/>
            <person name="Bersano T."/>
            <person name="Bono H."/>
            <person name="Chalk A.M."/>
            <person name="Chiu K.P."/>
            <person name="Choudhary V."/>
            <person name="Christoffels A."/>
            <person name="Clutterbuck D.R."/>
            <person name="Crowe M.L."/>
            <person name="Dalla E."/>
            <person name="Dalrymple B.P."/>
            <person name="de Bono B."/>
            <person name="Della Gatta G."/>
            <person name="di Bernardo D."/>
            <person name="Down T."/>
            <person name="Engstrom P."/>
            <person name="Fagiolini M."/>
            <person name="Faulkner G."/>
            <person name="Fletcher C.F."/>
            <person name="Fukushima T."/>
            <person name="Furuno M."/>
            <person name="Futaki S."/>
            <person name="Gariboldi M."/>
            <person name="Georgii-Hemming P."/>
            <person name="Gingeras T.R."/>
            <person name="Gojobori T."/>
            <person name="Green R.E."/>
            <person name="Gustincich S."/>
            <person name="Harbers M."/>
            <person name="Hayashi Y."/>
            <person name="Hensch T.K."/>
            <person name="Hirokawa N."/>
            <person name="Hill D."/>
            <person name="Huminiecki L."/>
            <person name="Iacono M."/>
            <person name="Ikeo K."/>
            <person name="Iwama A."/>
            <person name="Ishikawa T."/>
            <person name="Jakt M."/>
            <person name="Kanapin A."/>
            <person name="Katoh M."/>
            <person name="Kawasawa Y."/>
            <person name="Kelso J."/>
            <person name="Kitamura H."/>
            <person name="Kitano H."/>
            <person name="Kollias G."/>
            <person name="Krishnan S.P."/>
            <person name="Kruger A."/>
            <person name="Kummerfeld S.K."/>
            <person name="Kurochkin I.V."/>
            <person name="Lareau L.F."/>
            <person name="Lazarevic D."/>
            <person name="Lipovich L."/>
            <person name="Liu J."/>
            <person name="Liuni S."/>
            <person name="McWilliam S."/>
            <person name="Madan Babu M."/>
            <person name="Madera M."/>
            <person name="Marchionni L."/>
            <person name="Matsuda H."/>
            <person name="Matsuzawa S."/>
            <person name="Miki H."/>
            <person name="Mignone F."/>
            <person name="Miyake S."/>
            <person name="Morris K."/>
            <person name="Mottagui-Tabar S."/>
            <person name="Mulder N."/>
            <person name="Nakano N."/>
            <person name="Nakauchi H."/>
            <person name="Ng P."/>
            <person name="Nilsson R."/>
            <person name="Nishiguchi S."/>
            <person name="Nishikawa S."/>
            <person name="Nori F."/>
            <person name="Ohara O."/>
            <person name="Okazaki Y."/>
            <person name="Orlando V."/>
            <person name="Pang K.C."/>
            <person name="Pavan W.J."/>
            <person name="Pavesi G."/>
            <person name="Pesole G."/>
            <person name="Petrovsky N."/>
            <person name="Piazza S."/>
            <person name="Reed J."/>
            <person name="Reid J.F."/>
            <person name="Ring B.Z."/>
            <person name="Ringwald M."/>
            <person name="Rost B."/>
            <person name="Ruan Y."/>
            <person name="Salzberg S.L."/>
            <person name="Sandelin A."/>
            <person name="Schneider C."/>
            <person name="Schoenbach C."/>
            <person name="Sekiguchi K."/>
            <person name="Semple C.A."/>
            <person name="Seno S."/>
            <person name="Sessa L."/>
            <person name="Sheng Y."/>
            <person name="Shibata Y."/>
            <person name="Shimada H."/>
            <person name="Shimada K."/>
            <person name="Silva D."/>
            <person name="Sinclair B."/>
            <person name="Sperling S."/>
            <person name="Stupka E."/>
            <person name="Sugiura K."/>
            <person name="Sultana R."/>
            <person name="Takenaka Y."/>
            <person name="Taki K."/>
            <person name="Tammoja K."/>
            <person name="Tan S.L."/>
            <person name="Tang S."/>
            <person name="Taylor M.S."/>
            <person name="Tegner J."/>
            <person name="Teichmann S.A."/>
            <person name="Ueda H.R."/>
            <person name="van Nimwegen E."/>
            <person name="Verardo R."/>
            <person name="Wei C.L."/>
            <person name="Yagi K."/>
            <person name="Yamanishi H."/>
            <person name="Zabarovsky E."/>
            <person name="Zhu S."/>
            <person name="Zimmer A."/>
            <person name="Hide W."/>
            <person name="Bult C."/>
            <person name="Grimmond S.M."/>
            <person name="Teasdale R.D."/>
            <person name="Liu E.T."/>
            <person name="Brusic V."/>
            <person name="Quackenbush J."/>
            <person name="Wahlestedt C."/>
            <person name="Mattick J.S."/>
            <person name="Hume D.A."/>
            <person name="Kai C."/>
            <person name="Sasaki D."/>
            <person name="Tomaru Y."/>
            <person name="Fukuda S."/>
            <person name="Kanamori-Katayama M."/>
            <person name="Suzuki M."/>
            <person name="Aoki J."/>
            <person name="Arakawa T."/>
            <person name="Iida J."/>
            <person name="Imamura K."/>
            <person name="Itoh M."/>
            <person name="Kato T."/>
            <person name="Kawaji H."/>
            <person name="Kawagashira N."/>
            <person name="Kawashima T."/>
            <person name="Kojima M."/>
            <person name="Kondo S."/>
            <person name="Konno H."/>
            <person name="Nakano K."/>
            <person name="Ninomiya N."/>
            <person name="Nishio T."/>
            <person name="Okada M."/>
            <person name="Plessy C."/>
            <person name="Shibata K."/>
            <person name="Shiraki T."/>
            <person name="Suzuki S."/>
            <person name="Tagami M."/>
            <person name="Waki K."/>
            <person name="Watahiki A."/>
            <person name="Okamura-Oho Y."/>
            <person name="Suzuki H."/>
            <person name="Kawai J."/>
            <person name="Hayashizaki Y."/>
        </authorList>
    </citation>
    <scope>NUCLEOTIDE SEQUENCE [LARGE SCALE MRNA] (ISOFORMS 1; 2; 3; 4 AND 5)</scope>
    <source>
        <strain>C57BL/6J</strain>
        <tissue>Cerebellum</tissue>
        <tissue>Egg</tissue>
        <tissue>Eye</tissue>
        <tissue>Head</tissue>
        <tissue>Kidney</tissue>
        <tissue>Lung</tissue>
        <tissue>Testis</tissue>
        <tissue>Thymus</tissue>
    </source>
</reference>
<reference key="2">
    <citation type="journal article" date="2009" name="PLoS Biol.">
        <title>Lineage-specific biology revealed by a finished genome assembly of the mouse.</title>
        <authorList>
            <person name="Church D.M."/>
            <person name="Goodstadt L."/>
            <person name="Hillier L.W."/>
            <person name="Zody M.C."/>
            <person name="Goldstein S."/>
            <person name="She X."/>
            <person name="Bult C.J."/>
            <person name="Agarwala R."/>
            <person name="Cherry J.L."/>
            <person name="DiCuccio M."/>
            <person name="Hlavina W."/>
            <person name="Kapustin Y."/>
            <person name="Meric P."/>
            <person name="Maglott D."/>
            <person name="Birtle Z."/>
            <person name="Marques A.C."/>
            <person name="Graves T."/>
            <person name="Zhou S."/>
            <person name="Teague B."/>
            <person name="Potamousis K."/>
            <person name="Churas C."/>
            <person name="Place M."/>
            <person name="Herschleb J."/>
            <person name="Runnheim R."/>
            <person name="Forrest D."/>
            <person name="Amos-Landgraf J."/>
            <person name="Schwartz D.C."/>
            <person name="Cheng Z."/>
            <person name="Lindblad-Toh K."/>
            <person name="Eichler E.E."/>
            <person name="Ponting C.P."/>
        </authorList>
    </citation>
    <scope>NUCLEOTIDE SEQUENCE [LARGE SCALE GENOMIC DNA]</scope>
    <source>
        <strain>C57BL/6J</strain>
    </source>
</reference>
<reference key="3">
    <citation type="journal article" date="2004" name="Genome Res.">
        <title>The status, quality, and expansion of the NIH full-length cDNA project: the Mammalian Gene Collection (MGC).</title>
        <authorList>
            <consortium name="The MGC Project Team"/>
        </authorList>
    </citation>
    <scope>NUCLEOTIDE SEQUENCE [LARGE SCALE MRNA] (ISOFORM 1)</scope>
    <source>
        <strain>C57BL/6J</strain>
        <tissue>Egg</tissue>
    </source>
</reference>
<reference key="4">
    <citation type="journal article" date="2010" name="Cell">
        <title>A tissue-specific atlas of mouse protein phosphorylation and expression.</title>
        <authorList>
            <person name="Huttlin E.L."/>
            <person name="Jedrychowski M.P."/>
            <person name="Elias J.E."/>
            <person name="Goswami T."/>
            <person name="Rad R."/>
            <person name="Beausoleil S.A."/>
            <person name="Villen J."/>
            <person name="Haas W."/>
            <person name="Sowa M.E."/>
            <person name="Gygi S.P."/>
        </authorList>
    </citation>
    <scope>PHOSPHORYLATION [LARGE SCALE ANALYSIS] AT SER-104</scope>
    <scope>IDENTIFICATION BY MASS SPECTROMETRY [LARGE SCALE ANALYSIS]</scope>
    <source>
        <tissue>Lung</tissue>
        <tissue>Spleen</tissue>
    </source>
</reference>
<gene>
    <name type="primary">Ctdspl2</name>
    <name type="synonym">D2Ertd485e</name>
</gene>
<dbReference type="EC" id="3.1.3.-"/>
<dbReference type="EMBL" id="AK028251">
    <property type="protein sequence ID" value="BAC25842.1"/>
    <property type="status" value="ALT_INIT"/>
    <property type="molecule type" value="mRNA"/>
</dbReference>
<dbReference type="EMBL" id="AK030085">
    <property type="protein sequence ID" value="BAC26775.1"/>
    <property type="molecule type" value="mRNA"/>
</dbReference>
<dbReference type="EMBL" id="AK033382">
    <property type="protein sequence ID" value="BAC28257.1"/>
    <property type="molecule type" value="mRNA"/>
</dbReference>
<dbReference type="EMBL" id="AK041422">
    <property type="protein sequence ID" value="BAC30939.1"/>
    <property type="molecule type" value="mRNA"/>
</dbReference>
<dbReference type="EMBL" id="AK049463">
    <property type="protein sequence ID" value="BAC33759.1"/>
    <property type="molecule type" value="mRNA"/>
</dbReference>
<dbReference type="EMBL" id="AK053513">
    <property type="protein sequence ID" value="BAC35412.1"/>
    <property type="molecule type" value="mRNA"/>
</dbReference>
<dbReference type="EMBL" id="AK082646">
    <property type="protein sequence ID" value="BAC38557.1"/>
    <property type="molecule type" value="mRNA"/>
</dbReference>
<dbReference type="EMBL" id="AK160431">
    <property type="protein sequence ID" value="BAE35784.1"/>
    <property type="molecule type" value="mRNA"/>
</dbReference>
<dbReference type="EMBL" id="AK163262">
    <property type="protein sequence ID" value="BAE37265.1"/>
    <property type="molecule type" value="mRNA"/>
</dbReference>
<dbReference type="EMBL" id="AK169248">
    <property type="protein sequence ID" value="BAE41012.1"/>
    <property type="molecule type" value="mRNA"/>
</dbReference>
<dbReference type="EMBL" id="AL845457">
    <property type="status" value="NOT_ANNOTATED_CDS"/>
    <property type="molecule type" value="Genomic_DNA"/>
</dbReference>
<dbReference type="EMBL" id="BC052660">
    <property type="protein sequence ID" value="AAH52660.1"/>
    <property type="molecule type" value="mRNA"/>
</dbReference>
<dbReference type="CCDS" id="CCDS16652.1">
    <molecule id="Q8BG15-1"/>
</dbReference>
<dbReference type="CCDS" id="CCDS71130.1">
    <molecule id="Q8BG15-2"/>
</dbReference>
<dbReference type="RefSeq" id="NP_001277920.1">
    <molecule id="Q8BG15-2"/>
    <property type="nucleotide sequence ID" value="NM_001290991.1"/>
</dbReference>
<dbReference type="RefSeq" id="NP_001277921.1">
    <property type="nucleotide sequence ID" value="NM_001290992.1"/>
</dbReference>
<dbReference type="RefSeq" id="NP_997615.1">
    <molecule id="Q8BG15-1"/>
    <property type="nucleotide sequence ID" value="NM_212450.4"/>
</dbReference>
<dbReference type="SMR" id="Q8BG15"/>
<dbReference type="FunCoup" id="Q8BG15">
    <property type="interactions" value="4354"/>
</dbReference>
<dbReference type="STRING" id="10090.ENSMUSP00000047543"/>
<dbReference type="iPTMnet" id="Q8BG15"/>
<dbReference type="PhosphoSitePlus" id="Q8BG15"/>
<dbReference type="jPOST" id="Q8BG15"/>
<dbReference type="PaxDb" id="10090-ENSMUSP00000047543"/>
<dbReference type="PeptideAtlas" id="Q8BG15"/>
<dbReference type="ProteomicsDB" id="285420">
    <molecule id="Q8BG15-1"/>
</dbReference>
<dbReference type="ProteomicsDB" id="285421">
    <molecule id="Q8BG15-2"/>
</dbReference>
<dbReference type="ProteomicsDB" id="285422">
    <molecule id="Q8BG15-3"/>
</dbReference>
<dbReference type="ProteomicsDB" id="285423">
    <molecule id="Q8BG15-4"/>
</dbReference>
<dbReference type="ProteomicsDB" id="285424">
    <molecule id="Q8BG15-5"/>
</dbReference>
<dbReference type="ProteomicsDB" id="285425">
    <molecule id="Q8BG15-6"/>
</dbReference>
<dbReference type="Pumba" id="Q8BG15"/>
<dbReference type="Antibodypedia" id="42444">
    <property type="antibodies" value="138 antibodies from 26 providers"/>
</dbReference>
<dbReference type="DNASU" id="329506"/>
<dbReference type="Ensembl" id="ENSMUST00000036647.13">
    <molecule id="Q8BG15-1"/>
    <property type="protein sequence ID" value="ENSMUSP00000047543.7"/>
    <property type="gene ID" value="ENSMUSG00000033411.17"/>
</dbReference>
<dbReference type="Ensembl" id="ENSMUST00000110572.2">
    <molecule id="Q8BG15-6"/>
    <property type="protein sequence ID" value="ENSMUSP00000106201.2"/>
    <property type="gene ID" value="ENSMUSG00000033411.17"/>
</dbReference>
<dbReference type="Ensembl" id="ENSMUST00000110574.8">
    <molecule id="Q8BG15-1"/>
    <property type="protein sequence ID" value="ENSMUSP00000106203.2"/>
    <property type="gene ID" value="ENSMUSG00000033411.17"/>
</dbReference>
<dbReference type="Ensembl" id="ENSMUST00000110578.8">
    <molecule id="Q8BG15-2"/>
    <property type="protein sequence ID" value="ENSMUSP00000106207.2"/>
    <property type="gene ID" value="ENSMUSG00000033411.17"/>
</dbReference>
<dbReference type="GeneID" id="329506"/>
<dbReference type="KEGG" id="mmu:329506"/>
<dbReference type="UCSC" id="uc008lzw.2">
    <molecule id="Q8BG15-1"/>
    <property type="organism name" value="mouse"/>
</dbReference>
<dbReference type="UCSC" id="uc008lzx.2">
    <molecule id="Q8BG15-4"/>
    <property type="organism name" value="mouse"/>
</dbReference>
<dbReference type="UCSC" id="uc008maa.2">
    <molecule id="Q8BG15-2"/>
    <property type="organism name" value="mouse"/>
</dbReference>
<dbReference type="AGR" id="MGI:1196405"/>
<dbReference type="CTD" id="51496"/>
<dbReference type="MGI" id="MGI:1196405">
    <property type="gene designation" value="Ctdspl2"/>
</dbReference>
<dbReference type="VEuPathDB" id="HostDB:ENSMUSG00000033411"/>
<dbReference type="eggNOG" id="KOG1605">
    <property type="taxonomic scope" value="Eukaryota"/>
</dbReference>
<dbReference type="GeneTree" id="ENSGT01040000240503"/>
<dbReference type="HOGENOM" id="CLU_034042_4_0_1"/>
<dbReference type="InParanoid" id="Q8BG15"/>
<dbReference type="OMA" id="NQAIQVR"/>
<dbReference type="OrthoDB" id="277011at2759"/>
<dbReference type="PhylomeDB" id="Q8BG15"/>
<dbReference type="TreeFam" id="TF354278"/>
<dbReference type="BioGRID-ORCS" id="329506">
    <property type="hits" value="7 hits in 76 CRISPR screens"/>
</dbReference>
<dbReference type="ChiTaRS" id="Ctdspl2">
    <property type="organism name" value="mouse"/>
</dbReference>
<dbReference type="PRO" id="PR:Q8BG15"/>
<dbReference type="Proteomes" id="UP000000589">
    <property type="component" value="Chromosome 2"/>
</dbReference>
<dbReference type="RNAct" id="Q8BG15">
    <property type="molecule type" value="protein"/>
</dbReference>
<dbReference type="Bgee" id="ENSMUSG00000033411">
    <property type="expression patterns" value="Expressed in undifferentiated genital tubercle and 229 other cell types or tissues"/>
</dbReference>
<dbReference type="GO" id="GO:0005654">
    <property type="term" value="C:nucleoplasm"/>
    <property type="evidence" value="ECO:0007669"/>
    <property type="project" value="Ensembl"/>
</dbReference>
<dbReference type="GO" id="GO:0005634">
    <property type="term" value="C:nucleus"/>
    <property type="evidence" value="ECO:0000314"/>
    <property type="project" value="MGI"/>
</dbReference>
<dbReference type="GO" id="GO:0004721">
    <property type="term" value="F:phosphoprotein phosphatase activity"/>
    <property type="evidence" value="ECO:0000314"/>
    <property type="project" value="MGI"/>
</dbReference>
<dbReference type="GO" id="GO:0008420">
    <property type="term" value="F:RNA polymerase II CTD heptapeptide repeat phosphatase activity"/>
    <property type="evidence" value="ECO:0007669"/>
    <property type="project" value="Ensembl"/>
</dbReference>
<dbReference type="GO" id="GO:0030514">
    <property type="term" value="P:negative regulation of BMP signaling pathway"/>
    <property type="evidence" value="ECO:0000315"/>
    <property type="project" value="MGI"/>
</dbReference>
<dbReference type="GO" id="GO:0046827">
    <property type="term" value="P:positive regulation of protein export from nucleus"/>
    <property type="evidence" value="ECO:0000315"/>
    <property type="project" value="MGI"/>
</dbReference>
<dbReference type="GO" id="GO:0006611">
    <property type="term" value="P:protein export from nucleus"/>
    <property type="evidence" value="ECO:0000315"/>
    <property type="project" value="MGI"/>
</dbReference>
<dbReference type="CDD" id="cd07521">
    <property type="entry name" value="HAD_FCP1-like"/>
    <property type="match status" value="1"/>
</dbReference>
<dbReference type="FunFam" id="3.40.50.1000:FF:000015">
    <property type="entry name" value="CTD small phosphatase-like protein 2"/>
    <property type="match status" value="1"/>
</dbReference>
<dbReference type="Gene3D" id="3.40.50.1000">
    <property type="entry name" value="HAD superfamily/HAD-like"/>
    <property type="match status" value="1"/>
</dbReference>
<dbReference type="InterPro" id="IPR011948">
    <property type="entry name" value="Dullard_phosphatase"/>
</dbReference>
<dbReference type="InterPro" id="IPR004274">
    <property type="entry name" value="FCP1_dom"/>
</dbReference>
<dbReference type="InterPro" id="IPR036412">
    <property type="entry name" value="HAD-like_sf"/>
</dbReference>
<dbReference type="InterPro" id="IPR023214">
    <property type="entry name" value="HAD_sf"/>
</dbReference>
<dbReference type="InterPro" id="IPR050365">
    <property type="entry name" value="TIM50"/>
</dbReference>
<dbReference type="NCBIfam" id="TIGR02251">
    <property type="entry name" value="HIF-SF_euk"/>
    <property type="match status" value="1"/>
</dbReference>
<dbReference type="PANTHER" id="PTHR12210">
    <property type="entry name" value="DULLARD PROTEIN PHOSPHATASE"/>
    <property type="match status" value="1"/>
</dbReference>
<dbReference type="Pfam" id="PF03031">
    <property type="entry name" value="NIF"/>
    <property type="match status" value="1"/>
</dbReference>
<dbReference type="SMART" id="SM00577">
    <property type="entry name" value="CPDc"/>
    <property type="match status" value="1"/>
</dbReference>
<dbReference type="SUPFAM" id="SSF56784">
    <property type="entry name" value="HAD-like"/>
    <property type="match status" value="1"/>
</dbReference>
<dbReference type="PROSITE" id="PS50969">
    <property type="entry name" value="FCP1"/>
    <property type="match status" value="1"/>
</dbReference>
<keyword id="KW-0007">Acetylation</keyword>
<keyword id="KW-0025">Alternative splicing</keyword>
<keyword id="KW-0378">Hydrolase</keyword>
<keyword id="KW-0597">Phosphoprotein</keyword>
<keyword id="KW-0904">Protein phosphatase</keyword>
<keyword id="KW-1185">Reference proteome</keyword>
<comment type="function">
    <text evidence="1">Probable phosphatase.</text>
</comment>
<comment type="alternative products">
    <event type="alternative splicing"/>
    <isoform>
        <id>Q8BG15-1</id>
        <name>1</name>
        <sequence type="displayed"/>
    </isoform>
    <isoform>
        <id>Q8BG15-2</id>
        <name>2</name>
        <sequence type="described" ref="VSP_033220"/>
    </isoform>
    <isoform>
        <id>Q8BG15-3</id>
        <name>3</name>
        <sequence type="described" ref="VSP_033223"/>
    </isoform>
    <isoform>
        <id>Q8BG15-4</id>
        <name>4</name>
        <sequence type="described" ref="VSP_033219 VSP_033224"/>
    </isoform>
    <isoform>
        <id>Q8BG15-5</id>
        <name>5</name>
        <sequence type="described" ref="VSP_033222"/>
    </isoform>
    <isoform>
        <id>Q8BG15-6</id>
        <name>6</name>
        <sequence type="described" ref="VSP_033221"/>
    </isoform>
</comment>
<comment type="similarity">
    <text evidence="6">Belongs to the CTDSPL2 family.</text>
</comment>
<comment type="sequence caution" evidence="6">
    <conflict type="erroneous initiation">
        <sequence resource="EMBL-CDS" id="BAC25842"/>
    </conflict>
</comment>
<protein>
    <recommendedName>
        <fullName>CTD small phosphatase-like protein 2</fullName>
        <shortName>CTDSP-like 2</shortName>
        <ecNumber>3.1.3.-</ecNumber>
    </recommendedName>
</protein>
<name>CTSL2_MOUSE</name>
<feature type="chain" id="PRO_0000331465" description="CTD small phosphatase-like protein 2">
    <location>
        <begin position="1"/>
        <end position="465"/>
    </location>
</feature>
<feature type="domain" description="FCP1 homology" evidence="3">
    <location>
        <begin position="282"/>
        <end position="441"/>
    </location>
</feature>
<feature type="region of interest" description="Disordered" evidence="4">
    <location>
        <begin position="1"/>
        <end position="133"/>
    </location>
</feature>
<feature type="region of interest" description="Disordered" evidence="4">
    <location>
        <begin position="218"/>
        <end position="239"/>
    </location>
</feature>
<feature type="compositionally biased region" description="Polar residues" evidence="4">
    <location>
        <begin position="8"/>
        <end position="20"/>
    </location>
</feature>
<feature type="compositionally biased region" description="Basic and acidic residues" evidence="4">
    <location>
        <begin position="60"/>
        <end position="79"/>
    </location>
</feature>
<feature type="modified residue" description="N6-acetyllysine" evidence="2">
    <location>
        <position position="26"/>
    </location>
</feature>
<feature type="modified residue" description="Phosphoserine" evidence="2">
    <location>
        <position position="28"/>
    </location>
</feature>
<feature type="modified residue" description="Phosphoserine" evidence="2">
    <location>
        <position position="51"/>
    </location>
</feature>
<feature type="modified residue" description="N6-acetyllysine" evidence="2">
    <location>
        <position position="57"/>
    </location>
</feature>
<feature type="modified residue" description="Phosphoserine" evidence="2">
    <location>
        <position position="85"/>
    </location>
</feature>
<feature type="modified residue" description="Phosphothreonine" evidence="2">
    <location>
        <position position="86"/>
    </location>
</feature>
<feature type="modified residue" description="Phosphoserine" evidence="7">
    <location>
        <position position="104"/>
    </location>
</feature>
<feature type="modified residue" description="Phosphoserine" evidence="2">
    <location>
        <position position="134"/>
    </location>
</feature>
<feature type="modified residue" description="Phosphoserine" evidence="2">
    <location>
        <position position="165"/>
    </location>
</feature>
<feature type="splice variant" id="VSP_033219" description="In isoform 4." evidence="5">
    <location>
        <begin position="109"/>
        <end position="158"/>
    </location>
</feature>
<feature type="splice variant" id="VSP_033220" description="In isoform 2." evidence="5">
    <location>
        <position position="109"/>
    </location>
</feature>
<feature type="splice variant" id="VSP_033221" description="In isoform 6." evidence="6">
    <location>
        <begin position="159"/>
        <end position="229"/>
    </location>
</feature>
<feature type="splice variant" id="VSP_033222" description="In isoform 5." evidence="5">
    <location>
        <begin position="257"/>
        <end position="465"/>
    </location>
</feature>
<feature type="splice variant" id="VSP_033223" description="In isoform 3." evidence="5">
    <original>VYVRLRPFFREFLERMSQMYEIILFTASKKVYADKLLNILDPKKQLVRHRLFREHCVCVQGNYIKDLNILGRDLSKTIIIDNSPQAFAYQLSNGIPIESWFMDKNDNELLKLIPFLEKLVELNEDVRPHIRDRFRLHDLLPPD</original>
    <variation>QVEARNTDTDPQEQLATLRQGFCLYFSP</variation>
    <location>
        <begin position="323"/>
        <end position="465"/>
    </location>
</feature>
<feature type="splice variant" id="VSP_033224" description="In isoform 4." evidence="5">
    <original>YVRLRPFFREFLERMSQMYEIILFTASKKVYADKLLNILDPKKQLVRHRLFREHCVCVQGNYIKDLNILGRDLSKTIIIDNSPQAFAYQLSNGIPIESWFMDKNDNELLKLIPFLEKLVELNEDVRPHIRDRFRLHDLLPPD</original>
    <variation>ILSLIFKPLGNILSEENFFCDVQCVFL</variation>
    <location>
        <begin position="324"/>
        <end position="465"/>
    </location>
</feature>
<feature type="sequence conflict" description="In Ref. 3; AAH52660." evidence="6" ref="3">
    <original>S</original>
    <variation>N</variation>
    <location>
        <position position="104"/>
    </location>
</feature>
<feature type="sequence conflict" description="In Ref. 1; BAE37265." evidence="6" ref="1">
    <original>I</original>
    <variation>V</variation>
    <location>
        <position position="187"/>
    </location>
</feature>
<accession>Q8BG15</accession>
<accession>A2ARL6</accession>
<accession>Q3TF86</accession>
<accession>Q3TQW7</accession>
<accession>Q3TV36</accession>
<accession>Q7TPZ9</accession>
<accession>Q8BPR3</accession>
<accession>Q8C9S0</accession>
<accession>Q8CEG6</accession>
<organism>
    <name type="scientific">Mus musculus</name>
    <name type="common">Mouse</name>
    <dbReference type="NCBI Taxonomy" id="10090"/>
    <lineage>
        <taxon>Eukaryota</taxon>
        <taxon>Metazoa</taxon>
        <taxon>Chordata</taxon>
        <taxon>Craniata</taxon>
        <taxon>Vertebrata</taxon>
        <taxon>Euteleostomi</taxon>
        <taxon>Mammalia</taxon>
        <taxon>Eutheria</taxon>
        <taxon>Euarchontoglires</taxon>
        <taxon>Glires</taxon>
        <taxon>Rodentia</taxon>
        <taxon>Myomorpha</taxon>
        <taxon>Muroidea</taxon>
        <taxon>Muridae</taxon>
        <taxon>Murinae</taxon>
        <taxon>Mus</taxon>
        <taxon>Mus</taxon>
    </lineage>
</organism>
<evidence type="ECO:0000250" key="1"/>
<evidence type="ECO:0000250" key="2">
    <source>
        <dbReference type="UniProtKB" id="Q05D32"/>
    </source>
</evidence>
<evidence type="ECO:0000255" key="3">
    <source>
        <dbReference type="PROSITE-ProRule" id="PRU00336"/>
    </source>
</evidence>
<evidence type="ECO:0000256" key="4">
    <source>
        <dbReference type="SAM" id="MobiDB-lite"/>
    </source>
</evidence>
<evidence type="ECO:0000303" key="5">
    <source>
    </source>
</evidence>
<evidence type="ECO:0000305" key="6"/>
<evidence type="ECO:0007744" key="7">
    <source>
    </source>
</evidence>